<proteinExistence type="evidence at protein level"/>
<dbReference type="EMBL" id="CP002685">
    <property type="protein sequence ID" value="AEC10514.1"/>
    <property type="molecule type" value="Genomic_DNA"/>
</dbReference>
<dbReference type="EMBL" id="AY093014">
    <property type="protein sequence ID" value="AAM13013.1"/>
    <property type="molecule type" value="mRNA"/>
</dbReference>
<dbReference type="EMBL" id="BT006283">
    <property type="protein sequence ID" value="AAP13391.1"/>
    <property type="molecule type" value="mRNA"/>
</dbReference>
<dbReference type="EMBL" id="AY088399">
    <property type="protein sequence ID" value="AAM65937.1"/>
    <property type="molecule type" value="mRNA"/>
</dbReference>
<dbReference type="PIR" id="H84886">
    <property type="entry name" value="H84886"/>
</dbReference>
<dbReference type="RefSeq" id="NP_182039.1">
    <property type="nucleotide sequence ID" value="NM_130077.3"/>
</dbReference>
<dbReference type="SMR" id="Q9SHC8"/>
<dbReference type="BioGRID" id="4458">
    <property type="interactions" value="4"/>
</dbReference>
<dbReference type="FunCoup" id="Q9SHC8">
    <property type="interactions" value="3066"/>
</dbReference>
<dbReference type="IntAct" id="Q9SHC8">
    <property type="interactions" value="3"/>
</dbReference>
<dbReference type="STRING" id="3702.Q9SHC8"/>
<dbReference type="iPTMnet" id="Q9SHC8"/>
<dbReference type="PaxDb" id="3702-AT2G45140.1"/>
<dbReference type="ProteomicsDB" id="243258"/>
<dbReference type="EnsemblPlants" id="AT2G45140.1">
    <property type="protein sequence ID" value="AT2G45140.1"/>
    <property type="gene ID" value="AT2G45140"/>
</dbReference>
<dbReference type="GeneID" id="819122"/>
<dbReference type="Gramene" id="AT2G45140.1">
    <property type="protein sequence ID" value="AT2G45140.1"/>
    <property type="gene ID" value="AT2G45140"/>
</dbReference>
<dbReference type="KEGG" id="ath:AT2G45140"/>
<dbReference type="Araport" id="AT2G45140"/>
<dbReference type="TAIR" id="AT2G45140">
    <property type="gene designation" value="PVA12"/>
</dbReference>
<dbReference type="eggNOG" id="KOG0439">
    <property type="taxonomic scope" value="Eukaryota"/>
</dbReference>
<dbReference type="HOGENOM" id="CLU_036554_1_2_1"/>
<dbReference type="InParanoid" id="Q9SHC8"/>
<dbReference type="OrthoDB" id="264603at2759"/>
<dbReference type="PhylomeDB" id="Q9SHC8"/>
<dbReference type="CD-CODE" id="4299E36E">
    <property type="entry name" value="Nucleolus"/>
</dbReference>
<dbReference type="PRO" id="PR:Q9SHC8"/>
<dbReference type="Proteomes" id="UP000006548">
    <property type="component" value="Chromosome 2"/>
</dbReference>
<dbReference type="ExpressionAtlas" id="Q9SHC8">
    <property type="expression patterns" value="baseline and differential"/>
</dbReference>
<dbReference type="GO" id="GO:0005829">
    <property type="term" value="C:cytosol"/>
    <property type="evidence" value="ECO:0007005"/>
    <property type="project" value="TAIR"/>
</dbReference>
<dbReference type="GO" id="GO:0005783">
    <property type="term" value="C:endoplasmic reticulum"/>
    <property type="evidence" value="ECO:0000314"/>
    <property type="project" value="UniProtKB"/>
</dbReference>
<dbReference type="GO" id="GO:0005789">
    <property type="term" value="C:endoplasmic reticulum membrane"/>
    <property type="evidence" value="ECO:0007669"/>
    <property type="project" value="UniProtKB-SubCell"/>
</dbReference>
<dbReference type="GO" id="GO:0005886">
    <property type="term" value="C:plasma membrane"/>
    <property type="evidence" value="ECO:0007005"/>
    <property type="project" value="TAIR"/>
</dbReference>
<dbReference type="GO" id="GO:0006605">
    <property type="term" value="P:protein targeting"/>
    <property type="evidence" value="ECO:0000314"/>
    <property type="project" value="UniProtKB"/>
</dbReference>
<dbReference type="FunFam" id="2.60.40.10:FF:000813">
    <property type="entry name" value="Vesicle-associated protein 1-1"/>
    <property type="match status" value="1"/>
</dbReference>
<dbReference type="Gene3D" id="2.60.40.10">
    <property type="entry name" value="Immunoglobulins"/>
    <property type="match status" value="1"/>
</dbReference>
<dbReference type="InterPro" id="IPR013783">
    <property type="entry name" value="Ig-like_fold"/>
</dbReference>
<dbReference type="InterPro" id="IPR000535">
    <property type="entry name" value="MSP_dom"/>
</dbReference>
<dbReference type="InterPro" id="IPR008962">
    <property type="entry name" value="PapD-like_sf"/>
</dbReference>
<dbReference type="InterPro" id="IPR016763">
    <property type="entry name" value="VAP"/>
</dbReference>
<dbReference type="PANTHER" id="PTHR10809">
    <property type="entry name" value="VESICLE-ASSOCIATED MEMBRANE PROTEIN-ASSOCIATED PROTEIN"/>
    <property type="match status" value="1"/>
</dbReference>
<dbReference type="PANTHER" id="PTHR10809:SF119">
    <property type="entry name" value="VESICLE-ASSOCIATED PROTEIN 1-2-RELATED"/>
    <property type="match status" value="1"/>
</dbReference>
<dbReference type="Pfam" id="PF00635">
    <property type="entry name" value="Motile_Sperm"/>
    <property type="match status" value="1"/>
</dbReference>
<dbReference type="PIRSF" id="PIRSF019693">
    <property type="entry name" value="VAMP-associated"/>
    <property type="match status" value="1"/>
</dbReference>
<dbReference type="SUPFAM" id="SSF49354">
    <property type="entry name" value="PapD-like"/>
    <property type="match status" value="1"/>
</dbReference>
<dbReference type="PROSITE" id="PS50202">
    <property type="entry name" value="MSP"/>
    <property type="match status" value="1"/>
</dbReference>
<organism>
    <name type="scientific">Arabidopsis thaliana</name>
    <name type="common">Mouse-ear cress</name>
    <dbReference type="NCBI Taxonomy" id="3702"/>
    <lineage>
        <taxon>Eukaryota</taxon>
        <taxon>Viridiplantae</taxon>
        <taxon>Streptophyta</taxon>
        <taxon>Embryophyta</taxon>
        <taxon>Tracheophyta</taxon>
        <taxon>Spermatophyta</taxon>
        <taxon>Magnoliopsida</taxon>
        <taxon>eudicotyledons</taxon>
        <taxon>Gunneridae</taxon>
        <taxon>Pentapetalae</taxon>
        <taxon>rosids</taxon>
        <taxon>malvids</taxon>
        <taxon>Brassicales</taxon>
        <taxon>Brassicaceae</taxon>
        <taxon>Camelineae</taxon>
        <taxon>Arabidopsis</taxon>
    </lineage>
</organism>
<feature type="chain" id="PRO_0000425784" description="Vesicle-associated protein 1-2">
    <location>
        <begin position="1"/>
        <end position="239"/>
    </location>
</feature>
<feature type="initiator methionine" description="Removed; alternate" evidence="13">
    <location>
        <position position="1"/>
    </location>
</feature>
<feature type="chain" id="PRO_0000402170" description="Vesicle-associated protein 1-2, N-terminally processed">
    <location>
        <begin position="2"/>
        <end position="239"/>
    </location>
</feature>
<feature type="topological domain" description="Cytoplasmic" evidence="2">
    <location>
        <begin position="1"/>
        <end position="215"/>
    </location>
</feature>
<feature type="transmembrane region" description="Helical; Anchor for type IV membrane protein" evidence="2">
    <location>
        <begin position="216"/>
        <end position="236"/>
    </location>
</feature>
<feature type="domain" description="MSP" evidence="3">
    <location>
        <begin position="5"/>
        <end position="125"/>
    </location>
</feature>
<feature type="region of interest" description="Disordered" evidence="4">
    <location>
        <begin position="123"/>
        <end position="174"/>
    </location>
</feature>
<feature type="coiled-coil region" evidence="2">
    <location>
        <begin position="169"/>
        <end position="215"/>
    </location>
</feature>
<feature type="compositionally biased region" description="Polar residues" evidence="4">
    <location>
        <begin position="140"/>
        <end position="156"/>
    </location>
</feature>
<feature type="modified residue" description="N-acetylmethionine" evidence="1">
    <location>
        <position position="1"/>
    </location>
</feature>
<feature type="modified residue" description="N-acetylserine; in Vesicle-associated protein 1-2, N-terminally processed" evidence="13">
    <location>
        <position position="2"/>
    </location>
</feature>
<feature type="modified residue" description="Phosphoserine" evidence="11 12">
    <location>
        <position position="132"/>
    </location>
</feature>
<feature type="modified residue" description="Phosphoserine" evidence="11 12">
    <location>
        <position position="164"/>
    </location>
</feature>
<keyword id="KW-0007">Acetylation</keyword>
<keyword id="KW-0175">Coiled coil</keyword>
<keyword id="KW-0256">Endoplasmic reticulum</keyword>
<keyword id="KW-0472">Membrane</keyword>
<keyword id="KW-0597">Phosphoprotein</keyword>
<keyword id="KW-1185">Reference proteome</keyword>
<keyword id="KW-0812">Transmembrane</keyword>
<keyword id="KW-1133">Transmembrane helix</keyword>
<gene>
    <name evidence="7" type="primary">PVA12</name>
    <name evidence="9" type="synonym">VAP12</name>
    <name evidence="10" type="ordered locus">At2g45140</name>
    <name evidence="8" type="ORF">T14P1.5</name>
</gene>
<reference key="1">
    <citation type="journal article" date="1999" name="Nature">
        <title>Sequence and analysis of chromosome 2 of the plant Arabidopsis thaliana.</title>
        <authorList>
            <person name="Lin X."/>
            <person name="Kaul S."/>
            <person name="Rounsley S.D."/>
            <person name="Shea T.P."/>
            <person name="Benito M.-I."/>
            <person name="Town C.D."/>
            <person name="Fujii C.Y."/>
            <person name="Mason T.M."/>
            <person name="Bowman C.L."/>
            <person name="Barnstead M.E."/>
            <person name="Feldblyum T.V."/>
            <person name="Buell C.R."/>
            <person name="Ketchum K.A."/>
            <person name="Lee J.J."/>
            <person name="Ronning C.M."/>
            <person name="Koo H.L."/>
            <person name="Moffat K.S."/>
            <person name="Cronin L.A."/>
            <person name="Shen M."/>
            <person name="Pai G."/>
            <person name="Van Aken S."/>
            <person name="Umayam L."/>
            <person name="Tallon L.J."/>
            <person name="Gill J.E."/>
            <person name="Adams M.D."/>
            <person name="Carrera A.J."/>
            <person name="Creasy T.H."/>
            <person name="Goodman H.M."/>
            <person name="Somerville C.R."/>
            <person name="Copenhaver G.P."/>
            <person name="Preuss D."/>
            <person name="Nierman W.C."/>
            <person name="White O."/>
            <person name="Eisen J.A."/>
            <person name="Salzberg S.L."/>
            <person name="Fraser C.M."/>
            <person name="Venter J.C."/>
        </authorList>
    </citation>
    <scope>NUCLEOTIDE SEQUENCE [LARGE SCALE GENOMIC DNA]</scope>
    <source>
        <strain>cv. Columbia</strain>
    </source>
</reference>
<reference key="2">
    <citation type="journal article" date="2017" name="Plant J.">
        <title>Araport11: a complete reannotation of the Arabidopsis thaliana reference genome.</title>
        <authorList>
            <person name="Cheng C.Y."/>
            <person name="Krishnakumar V."/>
            <person name="Chan A.P."/>
            <person name="Thibaud-Nissen F."/>
            <person name="Schobel S."/>
            <person name="Town C.D."/>
        </authorList>
    </citation>
    <scope>GENOME REANNOTATION</scope>
    <source>
        <strain>cv. Columbia</strain>
    </source>
</reference>
<reference key="3">
    <citation type="journal article" date="2003" name="Science">
        <title>Empirical analysis of transcriptional activity in the Arabidopsis genome.</title>
        <authorList>
            <person name="Yamada K."/>
            <person name="Lim J."/>
            <person name="Dale J.M."/>
            <person name="Chen H."/>
            <person name="Shinn P."/>
            <person name="Palm C.J."/>
            <person name="Southwick A.M."/>
            <person name="Wu H.C."/>
            <person name="Kim C.J."/>
            <person name="Nguyen M."/>
            <person name="Pham P.K."/>
            <person name="Cheuk R.F."/>
            <person name="Karlin-Newmann G."/>
            <person name="Liu S.X."/>
            <person name="Lam B."/>
            <person name="Sakano H."/>
            <person name="Wu T."/>
            <person name="Yu G."/>
            <person name="Miranda M."/>
            <person name="Quach H.L."/>
            <person name="Tripp M."/>
            <person name="Chang C.H."/>
            <person name="Lee J.M."/>
            <person name="Toriumi M.J."/>
            <person name="Chan M.M."/>
            <person name="Tang C.C."/>
            <person name="Onodera C.S."/>
            <person name="Deng J.M."/>
            <person name="Akiyama K."/>
            <person name="Ansari Y."/>
            <person name="Arakawa T."/>
            <person name="Banh J."/>
            <person name="Banno F."/>
            <person name="Bowser L."/>
            <person name="Brooks S.Y."/>
            <person name="Carninci P."/>
            <person name="Chao Q."/>
            <person name="Choy N."/>
            <person name="Enju A."/>
            <person name="Goldsmith A.D."/>
            <person name="Gurjal M."/>
            <person name="Hansen N.F."/>
            <person name="Hayashizaki Y."/>
            <person name="Johnson-Hopson C."/>
            <person name="Hsuan V.W."/>
            <person name="Iida K."/>
            <person name="Karnes M."/>
            <person name="Khan S."/>
            <person name="Koesema E."/>
            <person name="Ishida J."/>
            <person name="Jiang P.X."/>
            <person name="Jones T."/>
            <person name="Kawai J."/>
            <person name="Kamiya A."/>
            <person name="Meyers C."/>
            <person name="Nakajima M."/>
            <person name="Narusaka M."/>
            <person name="Seki M."/>
            <person name="Sakurai T."/>
            <person name="Satou M."/>
            <person name="Tamse R."/>
            <person name="Vaysberg M."/>
            <person name="Wallender E.K."/>
            <person name="Wong C."/>
            <person name="Yamamura Y."/>
            <person name="Yuan S."/>
            <person name="Shinozaki K."/>
            <person name="Davis R.W."/>
            <person name="Theologis A."/>
            <person name="Ecker J.R."/>
        </authorList>
    </citation>
    <scope>NUCLEOTIDE SEQUENCE [LARGE SCALE MRNA]</scope>
    <source>
        <strain>cv. Columbia</strain>
    </source>
</reference>
<reference key="4">
    <citation type="submission" date="2002-03" db="EMBL/GenBank/DDBJ databases">
        <title>Full-length cDNA from Arabidopsis thaliana.</title>
        <authorList>
            <person name="Brover V.V."/>
            <person name="Troukhan M.E."/>
            <person name="Alexandrov N.A."/>
            <person name="Lu Y.-P."/>
            <person name="Flavell R.B."/>
            <person name="Feldmann K.A."/>
        </authorList>
    </citation>
    <scope>NUCLEOTIDE SEQUENCE [LARGE SCALE MRNA]</scope>
</reference>
<reference key="5">
    <citation type="journal article" date="2008" name="J. Proteome Res.">
        <title>Site-specific phosphorylation profiling of Arabidopsis proteins by mass spectrometry and peptide chip analysis.</title>
        <authorList>
            <person name="de la Fuente van Bentem S."/>
            <person name="Anrather D."/>
            <person name="Dohnal I."/>
            <person name="Roitinger E."/>
            <person name="Csaszar E."/>
            <person name="Joore J."/>
            <person name="Buijnink J."/>
            <person name="Carreri A."/>
            <person name="Forzani C."/>
            <person name="Lorkovic Z.J."/>
            <person name="Barta A."/>
            <person name="Lecourieux D."/>
            <person name="Verhounig A."/>
            <person name="Jonak C."/>
            <person name="Hirt H."/>
        </authorList>
    </citation>
    <scope>IDENTIFICATION BY MASS SPECTROMETRY [LARGE SCALE ANALYSIS]</scope>
    <source>
        <tissue>Root</tissue>
    </source>
</reference>
<reference key="6">
    <citation type="journal article" date="2009" name="J. Proteomics">
        <title>Phosphoproteomic analysis of nuclei-enriched fractions from Arabidopsis thaliana.</title>
        <authorList>
            <person name="Jones A.M.E."/>
            <person name="MacLean D."/>
            <person name="Studholme D.J."/>
            <person name="Serna-Sanz A."/>
            <person name="Andreasson E."/>
            <person name="Rathjen J.P."/>
            <person name="Peck S.C."/>
        </authorList>
    </citation>
    <scope>PHOSPHORYLATION [LARGE SCALE ANALYSIS] AT SER-132 AND SER-164</scope>
    <scope>IDENTIFICATION BY MASS SPECTROMETRY [LARGE SCALE ANALYSIS]</scope>
    <source>
        <strain>cv. Columbia</strain>
    </source>
</reference>
<reference key="7">
    <citation type="journal article" date="2009" name="Plant J.">
        <title>The targeting of the oxysterol-binding protein ORP3a to the endoplasmic reticulum relies on the plant VAP33 homolog PVA12.</title>
        <authorList>
            <person name="Saravanan R.S."/>
            <person name="Slabaugh E."/>
            <person name="Singh V.R."/>
            <person name="Lapidus L.J."/>
            <person name="Haas T."/>
            <person name="Brandizzi F."/>
        </authorList>
    </citation>
    <scope>FUNCTION</scope>
    <scope>SUBCELLULAR LOCATION</scope>
    <scope>INTERACTION WITH ORP3A</scope>
</reference>
<reference key="8">
    <citation type="journal article" date="2009" name="Plant Physiol.">
        <title>Large-scale Arabidopsis phosphoproteome profiling reveals novel chloroplast kinase substrates and phosphorylation networks.</title>
        <authorList>
            <person name="Reiland S."/>
            <person name="Messerli G."/>
            <person name="Baerenfaller K."/>
            <person name="Gerrits B."/>
            <person name="Endler A."/>
            <person name="Grossmann J."/>
            <person name="Gruissem W."/>
            <person name="Baginsky S."/>
        </authorList>
    </citation>
    <scope>PHOSPHORYLATION [LARGE SCALE ANALYSIS] AT SER-132 AND SER-164</scope>
    <scope>IDENTIFICATION BY MASS SPECTROMETRY [LARGE SCALE ANALYSIS]</scope>
</reference>
<reference key="9">
    <citation type="journal article" date="2012" name="Mol. Cell. Proteomics">
        <title>Comparative large-scale characterisation of plant vs. mammal proteins reveals similar and idiosyncratic N-alpha acetylation features.</title>
        <authorList>
            <person name="Bienvenut W.V."/>
            <person name="Sumpton D."/>
            <person name="Martinez A."/>
            <person name="Lilla S."/>
            <person name="Espagne C."/>
            <person name="Meinnel T."/>
            <person name="Giglione C."/>
        </authorList>
    </citation>
    <scope>ACETYLATION [LARGE SCALE ANALYSIS] AT SER-2</scope>
    <scope>CLEAVAGE OF INITIATOR METHIONINE [LARGE SCALE ANALYSIS]</scope>
    <scope>IDENTIFICATION BY MASS SPECTROMETRY [LARGE SCALE ANALYSIS]</scope>
</reference>
<reference key="10">
    <citation type="journal article" date="2017" name="Plant J.">
        <title>The DC1-domain protein VACUOLELESS GAMETOPHYTES is essential for development of female and male gametophytes in Arabidopsis.</title>
        <authorList>
            <person name="D'Ippolito S."/>
            <person name="Arias L.A."/>
            <person name="Casalongue C.A."/>
            <person name="Pagnussat G.C."/>
            <person name="Fiol D.F."/>
        </authorList>
    </citation>
    <scope>INTERACTION WITH VLG</scope>
    <source>
        <strain>cv. Columbia</strain>
    </source>
</reference>
<evidence type="ECO:0000250" key="1">
    <source>
        <dbReference type="UniProtKB" id="B9DHD7"/>
    </source>
</evidence>
<evidence type="ECO:0000255" key="2"/>
<evidence type="ECO:0000255" key="3">
    <source>
        <dbReference type="PROSITE-ProRule" id="PRU00132"/>
    </source>
</evidence>
<evidence type="ECO:0000256" key="4">
    <source>
        <dbReference type="SAM" id="MobiDB-lite"/>
    </source>
</evidence>
<evidence type="ECO:0000269" key="5">
    <source>
    </source>
</evidence>
<evidence type="ECO:0000269" key="6">
    <source>
    </source>
</evidence>
<evidence type="ECO:0000303" key="7">
    <source>
    </source>
</evidence>
<evidence type="ECO:0000305" key="8"/>
<evidence type="ECO:0000305" key="9">
    <source>
    </source>
</evidence>
<evidence type="ECO:0000312" key="10">
    <source>
        <dbReference type="Araport" id="AT2G45140"/>
    </source>
</evidence>
<evidence type="ECO:0007744" key="11">
    <source>
    </source>
</evidence>
<evidence type="ECO:0007744" key="12">
    <source>
    </source>
</evidence>
<evidence type="ECO:0007744" key="13">
    <source>
    </source>
</evidence>
<name>VAP12_ARATH</name>
<protein>
    <recommendedName>
        <fullName evidence="9">Vesicle-associated protein 1-2</fullName>
    </recommendedName>
    <alternativeName>
        <fullName evidence="7">Plant VAP homolog 12</fullName>
        <shortName evidence="7">AtPVA12</shortName>
    </alternativeName>
    <alternativeName>
        <fullName evidence="9">VAMP-associated protein 1-2</fullName>
    </alternativeName>
    <component>
        <recommendedName>
            <fullName evidence="9">Vesicle-associated protein 1-2, N-terminally processed</fullName>
        </recommendedName>
    </component>
</protein>
<comment type="function">
    <text evidence="5">Vesicle-associated protein that binds the oxysterol-binding protein ORP3A and allows its targeting to the ER.</text>
</comment>
<comment type="subunit">
    <text evidence="5 6">Interacts with ORP3A (PubMed:19207211). Binds to VLG at the endomembrane system (PubMed:28107777).</text>
</comment>
<comment type="interaction">
    <interactant intactId="EBI-2292633">
        <id>Q9SHC8</id>
    </interactant>
    <interactant intactId="EBI-2292648">
        <id>Q9LZM1</id>
        <label>ORP3A</label>
    </interactant>
    <organismsDiffer>false</organismsDiffer>
    <experiments>3</experiments>
</comment>
<comment type="subcellular location">
    <subcellularLocation>
        <location evidence="5">Endoplasmic reticulum membrane</location>
        <topology evidence="5">Single-pass type IV membrane protein</topology>
        <orientation evidence="5">Cytoplasmic side</orientation>
    </subcellularLocation>
</comment>
<comment type="similarity">
    <text evidence="8">Belongs to the VAMP-associated protein (VAP) (TC 9.B.17) family.</text>
</comment>
<accession>Q9SHC8</accession>
<sequence>MSNELLTIDPVDLQFPFELKKQISCSLYLGNKTDNYVAFKVKTTNPKKYCVRPNTGVVHPRSSSEVLVTMQAQKEAPADLQCKDKFLLQCVVASPGATPKDVTHEMFSKEAGHRVEETKLRVVYVAPPRPPSPVREGSEEGSSPRASVSDNGNASDFTAAPRFSADRVDAQDNSSEARALVTKLTEEKNSAVQLNNRLQQELDQLRRESKRSKSGGIPFMYVLLVGLIGLILGYIMKRT</sequence>